<feature type="chain" id="PRO_1000054035" description="Uridylate kinase">
    <location>
        <begin position="1"/>
        <end position="242"/>
    </location>
</feature>
<feature type="region of interest" description="Involved in allosteric activation by GTP" evidence="1">
    <location>
        <begin position="19"/>
        <end position="24"/>
    </location>
</feature>
<feature type="binding site" evidence="1">
    <location>
        <begin position="11"/>
        <end position="14"/>
    </location>
    <ligand>
        <name>ATP</name>
        <dbReference type="ChEBI" id="CHEBI:30616"/>
    </ligand>
</feature>
<feature type="binding site" evidence="1">
    <location>
        <position position="53"/>
    </location>
    <ligand>
        <name>UMP</name>
        <dbReference type="ChEBI" id="CHEBI:57865"/>
    </ligand>
</feature>
<feature type="binding site" evidence="1">
    <location>
        <position position="54"/>
    </location>
    <ligand>
        <name>ATP</name>
        <dbReference type="ChEBI" id="CHEBI:30616"/>
    </ligand>
</feature>
<feature type="binding site" evidence="1">
    <location>
        <position position="58"/>
    </location>
    <ligand>
        <name>ATP</name>
        <dbReference type="ChEBI" id="CHEBI:30616"/>
    </ligand>
</feature>
<feature type="binding site" evidence="1">
    <location>
        <position position="73"/>
    </location>
    <ligand>
        <name>UMP</name>
        <dbReference type="ChEBI" id="CHEBI:57865"/>
    </ligand>
</feature>
<feature type="binding site" evidence="1">
    <location>
        <begin position="134"/>
        <end position="141"/>
    </location>
    <ligand>
        <name>UMP</name>
        <dbReference type="ChEBI" id="CHEBI:57865"/>
    </ligand>
</feature>
<feature type="binding site" evidence="1">
    <location>
        <position position="162"/>
    </location>
    <ligand>
        <name>ATP</name>
        <dbReference type="ChEBI" id="CHEBI:30616"/>
    </ligand>
</feature>
<feature type="binding site" evidence="1">
    <location>
        <position position="168"/>
    </location>
    <ligand>
        <name>ATP</name>
        <dbReference type="ChEBI" id="CHEBI:30616"/>
    </ligand>
</feature>
<feature type="binding site" evidence="1">
    <location>
        <position position="171"/>
    </location>
    <ligand>
        <name>ATP</name>
        <dbReference type="ChEBI" id="CHEBI:30616"/>
    </ligand>
</feature>
<accession>Q1J833</accession>
<organism>
    <name type="scientific">Streptococcus pyogenes serotype M4 (strain MGAS10750)</name>
    <dbReference type="NCBI Taxonomy" id="370554"/>
    <lineage>
        <taxon>Bacteria</taxon>
        <taxon>Bacillati</taxon>
        <taxon>Bacillota</taxon>
        <taxon>Bacilli</taxon>
        <taxon>Lactobacillales</taxon>
        <taxon>Streptococcaceae</taxon>
        <taxon>Streptococcus</taxon>
    </lineage>
</organism>
<evidence type="ECO:0000255" key="1">
    <source>
        <dbReference type="HAMAP-Rule" id="MF_01220"/>
    </source>
</evidence>
<keyword id="KW-0021">Allosteric enzyme</keyword>
<keyword id="KW-0067">ATP-binding</keyword>
<keyword id="KW-0963">Cytoplasm</keyword>
<keyword id="KW-0418">Kinase</keyword>
<keyword id="KW-0547">Nucleotide-binding</keyword>
<keyword id="KW-0665">Pyrimidine biosynthesis</keyword>
<keyword id="KW-0808">Transferase</keyword>
<protein>
    <recommendedName>
        <fullName evidence="1">Uridylate kinase</fullName>
        <shortName evidence="1">UK</shortName>
        <ecNumber evidence="1">2.7.4.22</ecNumber>
    </recommendedName>
    <alternativeName>
        <fullName evidence="1">Uridine monophosphate kinase</fullName>
        <shortName evidence="1">UMP kinase</shortName>
        <shortName evidence="1">UMPK</shortName>
    </alternativeName>
</protein>
<dbReference type="EC" id="2.7.4.22" evidence="1"/>
<dbReference type="EMBL" id="CP000262">
    <property type="protein sequence ID" value="ABF37328.1"/>
    <property type="molecule type" value="Genomic_DNA"/>
</dbReference>
<dbReference type="SMR" id="Q1J833"/>
<dbReference type="KEGG" id="spi:MGAS10750_Spy0378"/>
<dbReference type="HOGENOM" id="CLU_033861_0_0_9"/>
<dbReference type="UniPathway" id="UPA00159">
    <property type="reaction ID" value="UER00275"/>
</dbReference>
<dbReference type="Proteomes" id="UP000002434">
    <property type="component" value="Chromosome"/>
</dbReference>
<dbReference type="GO" id="GO:0005737">
    <property type="term" value="C:cytoplasm"/>
    <property type="evidence" value="ECO:0007669"/>
    <property type="project" value="UniProtKB-SubCell"/>
</dbReference>
<dbReference type="GO" id="GO:0005524">
    <property type="term" value="F:ATP binding"/>
    <property type="evidence" value="ECO:0007669"/>
    <property type="project" value="UniProtKB-KW"/>
</dbReference>
<dbReference type="GO" id="GO:0033862">
    <property type="term" value="F:UMP kinase activity"/>
    <property type="evidence" value="ECO:0007669"/>
    <property type="project" value="UniProtKB-EC"/>
</dbReference>
<dbReference type="GO" id="GO:0044210">
    <property type="term" value="P:'de novo' CTP biosynthetic process"/>
    <property type="evidence" value="ECO:0007669"/>
    <property type="project" value="UniProtKB-UniRule"/>
</dbReference>
<dbReference type="GO" id="GO:0006225">
    <property type="term" value="P:UDP biosynthetic process"/>
    <property type="evidence" value="ECO:0007669"/>
    <property type="project" value="TreeGrafter"/>
</dbReference>
<dbReference type="CDD" id="cd04254">
    <property type="entry name" value="AAK_UMPK-PyrH-Ec"/>
    <property type="match status" value="1"/>
</dbReference>
<dbReference type="FunFam" id="3.40.1160.10:FF:000019">
    <property type="entry name" value="Uridylate kinase"/>
    <property type="match status" value="1"/>
</dbReference>
<dbReference type="Gene3D" id="3.40.1160.10">
    <property type="entry name" value="Acetylglutamate kinase-like"/>
    <property type="match status" value="1"/>
</dbReference>
<dbReference type="HAMAP" id="MF_01220_B">
    <property type="entry name" value="PyrH_B"/>
    <property type="match status" value="1"/>
</dbReference>
<dbReference type="InterPro" id="IPR036393">
    <property type="entry name" value="AceGlu_kinase-like_sf"/>
</dbReference>
<dbReference type="InterPro" id="IPR001048">
    <property type="entry name" value="Asp/Glu/Uridylate_kinase"/>
</dbReference>
<dbReference type="InterPro" id="IPR011817">
    <property type="entry name" value="Uridylate_kinase"/>
</dbReference>
<dbReference type="InterPro" id="IPR015963">
    <property type="entry name" value="Uridylate_kinase_bac"/>
</dbReference>
<dbReference type="NCBIfam" id="TIGR02075">
    <property type="entry name" value="pyrH_bact"/>
    <property type="match status" value="1"/>
</dbReference>
<dbReference type="PANTHER" id="PTHR42833">
    <property type="entry name" value="URIDYLATE KINASE"/>
    <property type="match status" value="1"/>
</dbReference>
<dbReference type="PANTHER" id="PTHR42833:SF4">
    <property type="entry name" value="URIDYLATE KINASE PUMPKIN, CHLOROPLASTIC"/>
    <property type="match status" value="1"/>
</dbReference>
<dbReference type="Pfam" id="PF00696">
    <property type="entry name" value="AA_kinase"/>
    <property type="match status" value="1"/>
</dbReference>
<dbReference type="PIRSF" id="PIRSF005650">
    <property type="entry name" value="Uridylate_kin"/>
    <property type="match status" value="1"/>
</dbReference>
<dbReference type="SUPFAM" id="SSF53633">
    <property type="entry name" value="Carbamate kinase-like"/>
    <property type="match status" value="1"/>
</dbReference>
<comment type="function">
    <text evidence="1">Catalyzes the reversible phosphorylation of UMP to UDP.</text>
</comment>
<comment type="catalytic activity">
    <reaction evidence="1">
        <text>UMP + ATP = UDP + ADP</text>
        <dbReference type="Rhea" id="RHEA:24400"/>
        <dbReference type="ChEBI" id="CHEBI:30616"/>
        <dbReference type="ChEBI" id="CHEBI:57865"/>
        <dbReference type="ChEBI" id="CHEBI:58223"/>
        <dbReference type="ChEBI" id="CHEBI:456216"/>
        <dbReference type="EC" id="2.7.4.22"/>
    </reaction>
</comment>
<comment type="activity regulation">
    <text evidence="1">Allosterically activated by GTP. Inhibited by UTP.</text>
</comment>
<comment type="pathway">
    <text evidence="1">Pyrimidine metabolism; CTP biosynthesis via de novo pathway; UDP from UMP (UMPK route): step 1/1.</text>
</comment>
<comment type="subunit">
    <text evidence="1">Homohexamer.</text>
</comment>
<comment type="subcellular location">
    <subcellularLocation>
        <location evidence="1">Cytoplasm</location>
    </subcellularLocation>
</comment>
<comment type="similarity">
    <text evidence="1">Belongs to the UMP kinase family.</text>
</comment>
<sequence length="242" mass="25896">MEPKYQRILIKLSGEALAGEKGVGIDIPTVQAIAKEIAEVHVSGVQIALVIGGGNLWRGEPAADAGMDRVQADYTGMLGTVMNALVMADSLQHYGVDTRVQTAIPMQNVAEPYIRGRALRHLEKNRIVVFGAGIGSPYFSTDTTAALRAAEIEADAILMAKNGVDGVYNADPKKDANAVKFDELTHGEVIKRGLKIMDATASTLSMDNDIDLVVFNMNEAGNIQRVVFGEHIGTTVSNKVCD</sequence>
<proteinExistence type="inferred from homology"/>
<gene>
    <name evidence="1" type="primary">pyrH</name>
    <name type="ordered locus">MGAS10750_Spy0378</name>
</gene>
<reference key="1">
    <citation type="journal article" date="2006" name="Proc. Natl. Acad. Sci. U.S.A.">
        <title>Molecular genetic anatomy of inter- and intraserotype variation in the human bacterial pathogen group A Streptococcus.</title>
        <authorList>
            <person name="Beres S.B."/>
            <person name="Richter E.W."/>
            <person name="Nagiec M.J."/>
            <person name="Sumby P."/>
            <person name="Porcella S.F."/>
            <person name="DeLeo F.R."/>
            <person name="Musser J.M."/>
        </authorList>
    </citation>
    <scope>NUCLEOTIDE SEQUENCE [LARGE SCALE GENOMIC DNA]</scope>
    <source>
        <strain>MGAS10750</strain>
    </source>
</reference>
<name>PYRH_STRPF</name>